<organism>
    <name type="scientific">Paraburkholderia phymatum (strain DSM 17167 / CIP 108236 / LMG 21445 / STM815)</name>
    <name type="common">Burkholderia phymatum</name>
    <dbReference type="NCBI Taxonomy" id="391038"/>
    <lineage>
        <taxon>Bacteria</taxon>
        <taxon>Pseudomonadati</taxon>
        <taxon>Pseudomonadota</taxon>
        <taxon>Betaproteobacteria</taxon>
        <taxon>Burkholderiales</taxon>
        <taxon>Burkholderiaceae</taxon>
        <taxon>Paraburkholderia</taxon>
    </lineage>
</organism>
<feature type="chain" id="PRO_1000100941" description="ATP-dependent protease ATPase subunit HslU">
    <location>
        <begin position="1"/>
        <end position="447"/>
    </location>
</feature>
<feature type="binding site" evidence="1">
    <location>
        <position position="18"/>
    </location>
    <ligand>
        <name>ATP</name>
        <dbReference type="ChEBI" id="CHEBI:30616"/>
    </ligand>
</feature>
<feature type="binding site" evidence="1">
    <location>
        <begin position="60"/>
        <end position="65"/>
    </location>
    <ligand>
        <name>ATP</name>
        <dbReference type="ChEBI" id="CHEBI:30616"/>
    </ligand>
</feature>
<feature type="binding site" evidence="1">
    <location>
        <position position="260"/>
    </location>
    <ligand>
        <name>ATP</name>
        <dbReference type="ChEBI" id="CHEBI:30616"/>
    </ligand>
</feature>
<feature type="binding site" evidence="1">
    <location>
        <position position="325"/>
    </location>
    <ligand>
        <name>ATP</name>
        <dbReference type="ChEBI" id="CHEBI:30616"/>
    </ligand>
</feature>
<feature type="binding site" evidence="1">
    <location>
        <position position="397"/>
    </location>
    <ligand>
        <name>ATP</name>
        <dbReference type="ChEBI" id="CHEBI:30616"/>
    </ligand>
</feature>
<protein>
    <recommendedName>
        <fullName evidence="1">ATP-dependent protease ATPase subunit HslU</fullName>
    </recommendedName>
    <alternativeName>
        <fullName evidence="1">Unfoldase HslU</fullName>
    </alternativeName>
</protein>
<comment type="function">
    <text evidence="1">ATPase subunit of a proteasome-like degradation complex; this subunit has chaperone activity. The binding of ATP and its subsequent hydrolysis by HslU are essential for unfolding of protein substrates subsequently hydrolyzed by HslV. HslU recognizes the N-terminal part of its protein substrates and unfolds these before they are guided to HslV for hydrolysis.</text>
</comment>
<comment type="subunit">
    <text evidence="1">A double ring-shaped homohexamer of HslV is capped on each side by a ring-shaped HslU homohexamer. The assembly of the HslU/HslV complex is dependent on binding of ATP.</text>
</comment>
<comment type="subcellular location">
    <subcellularLocation>
        <location evidence="1">Cytoplasm</location>
    </subcellularLocation>
</comment>
<comment type="similarity">
    <text evidence="1">Belongs to the ClpX chaperone family. HslU subfamily.</text>
</comment>
<sequence>MSTMTPAEIVSELDKHIIGQNRAKKAVAVALRNRWRRQQVDEPLRQEITPKNILMIGPTGVGKTEIARRLAKLADAPFIKIEATKFTEVGYVGRDVDSIVRDLIEISVKQTRETEMRKMRTKAEDLAEDRILDILLPGARTVGFGSGTSEASGDESNTTRQTFRKRLREGALDDKEIELDIEMQAPAMDIMGPPGMEDMTEQIRSMFANLGGGKKTRRKVKVKEALKLLTDEEASKMLNDEEVKTKAVQNVEQNGIVFLDEIDKIASRSEAGGGEVSRQGVQRDLLPLVEGTTINTKYGMVKTDHILFIASGAFHLAKPSDLIPELQGRFPIRVELDSLSVKDFESILVATDASLVKQYQALLATEDVHLEFADDGIRRLAEIAFSVNEKTENIGARRLYTVIEKLLEEVSFSAGNHTGKSVLIDAAYVDRALNDVAQDEDLSRYVL</sequence>
<reference key="1">
    <citation type="journal article" date="2014" name="Stand. Genomic Sci.">
        <title>Complete genome sequence of Burkholderia phymatum STM815(T), a broad host range and efficient nitrogen-fixing symbiont of Mimosa species.</title>
        <authorList>
            <person name="Moulin L."/>
            <person name="Klonowska A."/>
            <person name="Caroline B."/>
            <person name="Booth K."/>
            <person name="Vriezen J.A."/>
            <person name="Melkonian R."/>
            <person name="James E.K."/>
            <person name="Young J.P."/>
            <person name="Bena G."/>
            <person name="Hauser L."/>
            <person name="Land M."/>
            <person name="Kyrpides N."/>
            <person name="Bruce D."/>
            <person name="Chain P."/>
            <person name="Copeland A."/>
            <person name="Pitluck S."/>
            <person name="Woyke T."/>
            <person name="Lizotte-Waniewski M."/>
            <person name="Bristow J."/>
            <person name="Riley M."/>
        </authorList>
    </citation>
    <scope>NUCLEOTIDE SEQUENCE [LARGE SCALE GENOMIC DNA]</scope>
    <source>
        <strain>DSM 17167 / CIP 108236 / LMG 21445 / STM815</strain>
    </source>
</reference>
<name>HSLU_PARP8</name>
<evidence type="ECO:0000255" key="1">
    <source>
        <dbReference type="HAMAP-Rule" id="MF_00249"/>
    </source>
</evidence>
<gene>
    <name evidence="1" type="primary">hslU</name>
    <name type="ordered locus">Bphy_0069</name>
</gene>
<accession>B2JJX7</accession>
<keyword id="KW-0067">ATP-binding</keyword>
<keyword id="KW-0143">Chaperone</keyword>
<keyword id="KW-0963">Cytoplasm</keyword>
<keyword id="KW-0547">Nucleotide-binding</keyword>
<keyword id="KW-1185">Reference proteome</keyword>
<keyword id="KW-0346">Stress response</keyword>
<proteinExistence type="inferred from homology"/>
<dbReference type="EMBL" id="CP001043">
    <property type="protein sequence ID" value="ACC69264.1"/>
    <property type="molecule type" value="Genomic_DNA"/>
</dbReference>
<dbReference type="RefSeq" id="WP_012399494.1">
    <property type="nucleotide sequence ID" value="NC_010622.1"/>
</dbReference>
<dbReference type="SMR" id="B2JJX7"/>
<dbReference type="STRING" id="391038.Bphy_0069"/>
<dbReference type="KEGG" id="bph:Bphy_0069"/>
<dbReference type="eggNOG" id="COG1220">
    <property type="taxonomic scope" value="Bacteria"/>
</dbReference>
<dbReference type="HOGENOM" id="CLU_033123_0_0_4"/>
<dbReference type="OrthoDB" id="9804062at2"/>
<dbReference type="Proteomes" id="UP000001192">
    <property type="component" value="Chromosome 1"/>
</dbReference>
<dbReference type="GO" id="GO:0009376">
    <property type="term" value="C:HslUV protease complex"/>
    <property type="evidence" value="ECO:0007669"/>
    <property type="project" value="UniProtKB-UniRule"/>
</dbReference>
<dbReference type="GO" id="GO:0005524">
    <property type="term" value="F:ATP binding"/>
    <property type="evidence" value="ECO:0007669"/>
    <property type="project" value="UniProtKB-UniRule"/>
</dbReference>
<dbReference type="GO" id="GO:0016887">
    <property type="term" value="F:ATP hydrolysis activity"/>
    <property type="evidence" value="ECO:0007669"/>
    <property type="project" value="InterPro"/>
</dbReference>
<dbReference type="GO" id="GO:0008233">
    <property type="term" value="F:peptidase activity"/>
    <property type="evidence" value="ECO:0007669"/>
    <property type="project" value="InterPro"/>
</dbReference>
<dbReference type="GO" id="GO:0036402">
    <property type="term" value="F:proteasome-activating activity"/>
    <property type="evidence" value="ECO:0007669"/>
    <property type="project" value="UniProtKB-UniRule"/>
</dbReference>
<dbReference type="GO" id="GO:0043335">
    <property type="term" value="P:protein unfolding"/>
    <property type="evidence" value="ECO:0007669"/>
    <property type="project" value="UniProtKB-UniRule"/>
</dbReference>
<dbReference type="GO" id="GO:0051603">
    <property type="term" value="P:proteolysis involved in protein catabolic process"/>
    <property type="evidence" value="ECO:0007669"/>
    <property type="project" value="TreeGrafter"/>
</dbReference>
<dbReference type="CDD" id="cd19498">
    <property type="entry name" value="RecA-like_HslU"/>
    <property type="match status" value="1"/>
</dbReference>
<dbReference type="FunFam" id="3.40.50.300:FF:000213">
    <property type="entry name" value="ATP-dependent protease ATPase subunit HslU"/>
    <property type="match status" value="1"/>
</dbReference>
<dbReference type="FunFam" id="3.40.50.300:FF:000220">
    <property type="entry name" value="ATP-dependent protease ATPase subunit HslU"/>
    <property type="match status" value="1"/>
</dbReference>
<dbReference type="Gene3D" id="1.10.8.60">
    <property type="match status" value="1"/>
</dbReference>
<dbReference type="Gene3D" id="1.10.8.10">
    <property type="entry name" value="DNA helicase RuvA subunit, C-terminal domain"/>
    <property type="match status" value="2"/>
</dbReference>
<dbReference type="Gene3D" id="3.40.50.300">
    <property type="entry name" value="P-loop containing nucleotide triphosphate hydrolases"/>
    <property type="match status" value="2"/>
</dbReference>
<dbReference type="HAMAP" id="MF_00249">
    <property type="entry name" value="HslU"/>
    <property type="match status" value="1"/>
</dbReference>
<dbReference type="InterPro" id="IPR003593">
    <property type="entry name" value="AAA+_ATPase"/>
</dbReference>
<dbReference type="InterPro" id="IPR050052">
    <property type="entry name" value="ATP-dep_Clp_protease_ClpX"/>
</dbReference>
<dbReference type="InterPro" id="IPR003959">
    <property type="entry name" value="ATPase_AAA_core"/>
</dbReference>
<dbReference type="InterPro" id="IPR019489">
    <property type="entry name" value="Clp_ATPase_C"/>
</dbReference>
<dbReference type="InterPro" id="IPR004491">
    <property type="entry name" value="HslU"/>
</dbReference>
<dbReference type="InterPro" id="IPR027417">
    <property type="entry name" value="P-loop_NTPase"/>
</dbReference>
<dbReference type="NCBIfam" id="TIGR00390">
    <property type="entry name" value="hslU"/>
    <property type="match status" value="1"/>
</dbReference>
<dbReference type="NCBIfam" id="NF003544">
    <property type="entry name" value="PRK05201.1"/>
    <property type="match status" value="1"/>
</dbReference>
<dbReference type="PANTHER" id="PTHR48102">
    <property type="entry name" value="ATP-DEPENDENT CLP PROTEASE ATP-BINDING SUBUNIT CLPX-LIKE, MITOCHONDRIAL-RELATED"/>
    <property type="match status" value="1"/>
</dbReference>
<dbReference type="PANTHER" id="PTHR48102:SF3">
    <property type="entry name" value="ATP-DEPENDENT PROTEASE ATPASE SUBUNIT HSLU"/>
    <property type="match status" value="1"/>
</dbReference>
<dbReference type="Pfam" id="PF00004">
    <property type="entry name" value="AAA"/>
    <property type="match status" value="1"/>
</dbReference>
<dbReference type="Pfam" id="PF07724">
    <property type="entry name" value="AAA_2"/>
    <property type="match status" value="1"/>
</dbReference>
<dbReference type="SMART" id="SM00382">
    <property type="entry name" value="AAA"/>
    <property type="match status" value="1"/>
</dbReference>
<dbReference type="SMART" id="SM01086">
    <property type="entry name" value="ClpB_D2-small"/>
    <property type="match status" value="1"/>
</dbReference>
<dbReference type="SUPFAM" id="SSF52540">
    <property type="entry name" value="P-loop containing nucleoside triphosphate hydrolases"/>
    <property type="match status" value="1"/>
</dbReference>